<gene>
    <name evidence="1" type="primary">yfbU</name>
    <name type="ordered locus">SF2370</name>
    <name type="ordered locus">S2505</name>
</gene>
<accession>Q83QS1</accession>
<keyword id="KW-1185">Reference proteome</keyword>
<reference key="1">
    <citation type="journal article" date="2002" name="Nucleic Acids Res.">
        <title>Genome sequence of Shigella flexneri 2a: insights into pathogenicity through comparison with genomes of Escherichia coli K12 and O157.</title>
        <authorList>
            <person name="Jin Q."/>
            <person name="Yuan Z."/>
            <person name="Xu J."/>
            <person name="Wang Y."/>
            <person name="Shen Y."/>
            <person name="Lu W."/>
            <person name="Wang J."/>
            <person name="Liu H."/>
            <person name="Yang J."/>
            <person name="Yang F."/>
            <person name="Zhang X."/>
            <person name="Zhang J."/>
            <person name="Yang G."/>
            <person name="Wu H."/>
            <person name="Qu D."/>
            <person name="Dong J."/>
            <person name="Sun L."/>
            <person name="Xue Y."/>
            <person name="Zhao A."/>
            <person name="Gao Y."/>
            <person name="Zhu J."/>
            <person name="Kan B."/>
            <person name="Ding K."/>
            <person name="Chen S."/>
            <person name="Cheng H."/>
            <person name="Yao Z."/>
            <person name="He B."/>
            <person name="Chen R."/>
            <person name="Ma D."/>
            <person name="Qiang B."/>
            <person name="Wen Y."/>
            <person name="Hou Y."/>
            <person name="Yu J."/>
        </authorList>
    </citation>
    <scope>NUCLEOTIDE SEQUENCE [LARGE SCALE GENOMIC DNA]</scope>
    <source>
        <strain>301 / Serotype 2a</strain>
    </source>
</reference>
<reference key="2">
    <citation type="journal article" date="2003" name="Infect. Immun.">
        <title>Complete genome sequence and comparative genomics of Shigella flexneri serotype 2a strain 2457T.</title>
        <authorList>
            <person name="Wei J."/>
            <person name="Goldberg M.B."/>
            <person name="Burland V."/>
            <person name="Venkatesan M.M."/>
            <person name="Deng W."/>
            <person name="Fournier G."/>
            <person name="Mayhew G.F."/>
            <person name="Plunkett G. III"/>
            <person name="Rose D.J."/>
            <person name="Darling A."/>
            <person name="Mau B."/>
            <person name="Perna N.T."/>
            <person name="Payne S.M."/>
            <person name="Runyen-Janecky L.J."/>
            <person name="Zhou S."/>
            <person name="Schwartz D.C."/>
            <person name="Blattner F.R."/>
        </authorList>
    </citation>
    <scope>NUCLEOTIDE SEQUENCE [LARGE SCALE GENOMIC DNA]</scope>
    <source>
        <strain>ATCC 700930 / 2457T / Serotype 2a</strain>
    </source>
</reference>
<proteinExistence type="inferred from homology"/>
<comment type="similarity">
    <text evidence="1">Belongs to the UPF0304 family.</text>
</comment>
<feature type="chain" id="PRO_0000218169" description="UPF0304 protein YfbU">
    <location>
        <begin position="1"/>
        <end position="164"/>
    </location>
</feature>
<organism>
    <name type="scientific">Shigella flexneri</name>
    <dbReference type="NCBI Taxonomy" id="623"/>
    <lineage>
        <taxon>Bacteria</taxon>
        <taxon>Pseudomonadati</taxon>
        <taxon>Pseudomonadota</taxon>
        <taxon>Gammaproteobacteria</taxon>
        <taxon>Enterobacterales</taxon>
        <taxon>Enterobacteriaceae</taxon>
        <taxon>Shigella</taxon>
    </lineage>
</organism>
<dbReference type="EMBL" id="AE005674">
    <property type="protein sequence ID" value="AAN43883.1"/>
    <property type="molecule type" value="Genomic_DNA"/>
</dbReference>
<dbReference type="EMBL" id="AE014073">
    <property type="protein sequence ID" value="AAP17701.1"/>
    <property type="molecule type" value="Genomic_DNA"/>
</dbReference>
<dbReference type="RefSeq" id="NP_708176.1">
    <property type="nucleotide sequence ID" value="NC_004337.2"/>
</dbReference>
<dbReference type="RefSeq" id="WP_000426116.1">
    <property type="nucleotide sequence ID" value="NZ_WPGW01000016.1"/>
</dbReference>
<dbReference type="SMR" id="Q83QS1"/>
<dbReference type="STRING" id="198214.SF2370"/>
<dbReference type="PaxDb" id="198214-SF2370"/>
<dbReference type="GeneID" id="1027316"/>
<dbReference type="KEGG" id="sfl:SF2370"/>
<dbReference type="KEGG" id="sfx:S2505"/>
<dbReference type="PATRIC" id="fig|198214.7.peg.2836"/>
<dbReference type="HOGENOM" id="CLU_101021_1_0_6"/>
<dbReference type="Proteomes" id="UP000001006">
    <property type="component" value="Chromosome"/>
</dbReference>
<dbReference type="Proteomes" id="UP000002673">
    <property type="component" value="Chromosome"/>
</dbReference>
<dbReference type="FunFam" id="1.10.3190.10:FF:000001">
    <property type="entry name" value="UPF0304 protein YfbU"/>
    <property type="match status" value="1"/>
</dbReference>
<dbReference type="Gene3D" id="1.10.287.680">
    <property type="entry name" value="Helix hairpin bin"/>
    <property type="match status" value="1"/>
</dbReference>
<dbReference type="Gene3D" id="1.10.3190.10">
    <property type="entry name" value="yfbu gene product, domain 2"/>
    <property type="match status" value="1"/>
</dbReference>
<dbReference type="HAMAP" id="MF_00762">
    <property type="entry name" value="UPF0304"/>
    <property type="match status" value="1"/>
</dbReference>
<dbReference type="InterPro" id="IPR005587">
    <property type="entry name" value="UPF0304_YfbU"/>
</dbReference>
<dbReference type="InterPro" id="IPR023146">
    <property type="entry name" value="YfbU_alpha-helical_sf"/>
</dbReference>
<dbReference type="InterPro" id="IPR023145">
    <property type="entry name" value="YfbU_helix-hairpin_sf"/>
</dbReference>
<dbReference type="NCBIfam" id="NF003936">
    <property type="entry name" value="PRK05445.1"/>
    <property type="match status" value="1"/>
</dbReference>
<dbReference type="Pfam" id="PF03887">
    <property type="entry name" value="YfbU"/>
    <property type="match status" value="1"/>
</dbReference>
<dbReference type="PIRSF" id="PIRSF006272">
    <property type="entry name" value="UCP006272"/>
    <property type="match status" value="1"/>
</dbReference>
<dbReference type="SUPFAM" id="SSF116960">
    <property type="entry name" value="YfbU-like"/>
    <property type="match status" value="1"/>
</dbReference>
<evidence type="ECO:0000255" key="1">
    <source>
        <dbReference type="HAMAP-Rule" id="MF_00762"/>
    </source>
</evidence>
<protein>
    <recommendedName>
        <fullName evidence="1">UPF0304 protein YfbU</fullName>
    </recommendedName>
</protein>
<name>YFBU_SHIFL</name>
<sequence length="164" mass="19548">MEMTNAQRLILSNQYKMMTMLDPANAERYRRLQTIIERGYGLQMRELDREFGELKEETCRTIIDIMDMYHALYVSWSNLQDQQSIDERRVTFLGFDAATEARYLGYVRFMVNVEGRYTHFDAGTHGFNAQTPMWEKYQRMLNVWHACPRQYHLSANEINQIINA</sequence>